<evidence type="ECO:0000255" key="1">
    <source>
        <dbReference type="HAMAP-Rule" id="MF_00069"/>
    </source>
</evidence>
<dbReference type="EC" id="1.7.99.1" evidence="1"/>
<dbReference type="EMBL" id="CP000901">
    <property type="protein sequence ID" value="ABX85100.1"/>
    <property type="molecule type" value="Genomic_DNA"/>
</dbReference>
<dbReference type="RefSeq" id="WP_002211359.1">
    <property type="nucleotide sequence ID" value="NZ_CP009935.1"/>
</dbReference>
<dbReference type="SMR" id="A9R4X7"/>
<dbReference type="GeneID" id="57977156"/>
<dbReference type="KEGG" id="ypg:YpAngola_A1591"/>
<dbReference type="PATRIC" id="fig|349746.12.peg.2556"/>
<dbReference type="GO" id="GO:0005737">
    <property type="term" value="C:cytoplasm"/>
    <property type="evidence" value="ECO:0007669"/>
    <property type="project" value="UniProtKB-SubCell"/>
</dbReference>
<dbReference type="GO" id="GO:0051537">
    <property type="term" value="F:2 iron, 2 sulfur cluster binding"/>
    <property type="evidence" value="ECO:0007669"/>
    <property type="project" value="UniProtKB-KW"/>
</dbReference>
<dbReference type="GO" id="GO:0050418">
    <property type="term" value="F:hydroxylamine reductase activity"/>
    <property type="evidence" value="ECO:0007669"/>
    <property type="project" value="UniProtKB-UniRule"/>
</dbReference>
<dbReference type="GO" id="GO:0046872">
    <property type="term" value="F:metal ion binding"/>
    <property type="evidence" value="ECO:0007669"/>
    <property type="project" value="UniProtKB-KW"/>
</dbReference>
<dbReference type="GO" id="GO:0004601">
    <property type="term" value="F:peroxidase activity"/>
    <property type="evidence" value="ECO:0007669"/>
    <property type="project" value="TreeGrafter"/>
</dbReference>
<dbReference type="GO" id="GO:0042542">
    <property type="term" value="P:response to hydrogen peroxide"/>
    <property type="evidence" value="ECO:0007669"/>
    <property type="project" value="TreeGrafter"/>
</dbReference>
<dbReference type="CDD" id="cd01914">
    <property type="entry name" value="HCP"/>
    <property type="match status" value="1"/>
</dbReference>
<dbReference type="FunFam" id="1.20.1270.20:FF:000001">
    <property type="entry name" value="Hydroxylamine reductase"/>
    <property type="match status" value="1"/>
</dbReference>
<dbReference type="FunFam" id="1.20.1270.20:FF:000002">
    <property type="entry name" value="Hydroxylamine reductase"/>
    <property type="match status" value="1"/>
</dbReference>
<dbReference type="FunFam" id="3.40.50.2030:FF:000001">
    <property type="entry name" value="Hydroxylamine reductase"/>
    <property type="match status" value="1"/>
</dbReference>
<dbReference type="FunFam" id="3.40.50.2030:FF:000002">
    <property type="entry name" value="Hydroxylamine reductase"/>
    <property type="match status" value="1"/>
</dbReference>
<dbReference type="Gene3D" id="1.20.1270.20">
    <property type="match status" value="2"/>
</dbReference>
<dbReference type="Gene3D" id="3.40.50.2030">
    <property type="match status" value="2"/>
</dbReference>
<dbReference type="HAMAP" id="MF_00069">
    <property type="entry name" value="Hydroxylam_reduct"/>
    <property type="match status" value="1"/>
</dbReference>
<dbReference type="InterPro" id="IPR004137">
    <property type="entry name" value="HCP/CODH"/>
</dbReference>
<dbReference type="InterPro" id="IPR010048">
    <property type="entry name" value="Hydroxylam_reduct"/>
</dbReference>
<dbReference type="InterPro" id="IPR016099">
    <property type="entry name" value="Prismane-like_a/b-sand"/>
</dbReference>
<dbReference type="InterPro" id="IPR011254">
    <property type="entry name" value="Prismane-like_sf"/>
</dbReference>
<dbReference type="InterPro" id="IPR016100">
    <property type="entry name" value="Prismane_a-bundle"/>
</dbReference>
<dbReference type="NCBIfam" id="TIGR01703">
    <property type="entry name" value="hybrid_clust"/>
    <property type="match status" value="1"/>
</dbReference>
<dbReference type="NCBIfam" id="NF003658">
    <property type="entry name" value="PRK05290.1"/>
    <property type="match status" value="1"/>
</dbReference>
<dbReference type="PANTHER" id="PTHR30109">
    <property type="entry name" value="HYDROXYLAMINE REDUCTASE"/>
    <property type="match status" value="1"/>
</dbReference>
<dbReference type="PANTHER" id="PTHR30109:SF0">
    <property type="entry name" value="HYDROXYLAMINE REDUCTASE"/>
    <property type="match status" value="1"/>
</dbReference>
<dbReference type="Pfam" id="PF03063">
    <property type="entry name" value="Prismane"/>
    <property type="match status" value="1"/>
</dbReference>
<dbReference type="PIRSF" id="PIRSF000076">
    <property type="entry name" value="HCP"/>
    <property type="match status" value="1"/>
</dbReference>
<dbReference type="SUPFAM" id="SSF56821">
    <property type="entry name" value="Prismane protein-like"/>
    <property type="match status" value="1"/>
</dbReference>
<accession>A9R4X7</accession>
<sequence>MFCVQCEQTIRTPAGNGCSYAQGMCGKTAETSDLQDLLVAVLQGLSAWALQARELGIIDSQIDSFAPRAFFSTLTNVNFDSDRIVEYAKDAILLRHSLAVRCRLLDSTITVDHPLAELQLVADDIPSLLQQSQQFALNNDKADVGDDIHGLRMLCLYGLKGAAAYMEHAHVLGQSDEQIYAEYHAYMAWLGTQPRDVDTLLNNAMGIGKMNFNVMAILDQGETQAYGDPQPTSVNVRPVAGKAILISGHDLKDLHMLLEQTQGTGINIYTHGEMLPAHGYPELKRYPHLVGNYGSGWQNQQTEFAKFPGPILMTSNCIIDPNVGNYGDRIWTRSIVGWPGVNHLDGDNFAPVIEQALGMAGFPYSELEHLITVGFGRQTLLNAADTVIDLVASKKLRHVFLVGGCDGSRTERSYFTDFARSVPQDCIIMTLACGKYRFNKLDFGTLEGLPRLLDVGQCNDAYAAIMLAVKLSEKLGCTVNDLPLSLVLSWFEQKAIVILLTLLSLGVKNIYTGPTAPGFLTDNLMAILYEKFGMQPITTVEQDMQAILGH</sequence>
<gene>
    <name evidence="1" type="primary">hcp</name>
    <name type="ordered locus">YpAngola_A1591</name>
</gene>
<reference key="1">
    <citation type="journal article" date="2010" name="J. Bacteriol.">
        <title>Genome sequence of the deep-rooted Yersinia pestis strain Angola reveals new insights into the evolution and pangenome of the plague bacterium.</title>
        <authorList>
            <person name="Eppinger M."/>
            <person name="Worsham P.L."/>
            <person name="Nikolich M.P."/>
            <person name="Riley D.R."/>
            <person name="Sebastian Y."/>
            <person name="Mou S."/>
            <person name="Achtman M."/>
            <person name="Lindler L.E."/>
            <person name="Ravel J."/>
        </authorList>
    </citation>
    <scope>NUCLEOTIDE SEQUENCE [LARGE SCALE GENOMIC DNA]</scope>
    <source>
        <strain>Angola</strain>
    </source>
</reference>
<proteinExistence type="inferred from homology"/>
<comment type="function">
    <text evidence="1">Catalyzes the reduction of hydroxylamine to form NH(3) and H(2)O.</text>
</comment>
<comment type="catalytic activity">
    <reaction evidence="1">
        <text>A + NH4(+) + H2O = hydroxylamine + AH2 + H(+)</text>
        <dbReference type="Rhea" id="RHEA:22052"/>
        <dbReference type="ChEBI" id="CHEBI:13193"/>
        <dbReference type="ChEBI" id="CHEBI:15377"/>
        <dbReference type="ChEBI" id="CHEBI:15378"/>
        <dbReference type="ChEBI" id="CHEBI:15429"/>
        <dbReference type="ChEBI" id="CHEBI:17499"/>
        <dbReference type="ChEBI" id="CHEBI:28938"/>
        <dbReference type="EC" id="1.7.99.1"/>
    </reaction>
</comment>
<comment type="cofactor">
    <cofactor evidence="1">
        <name>[2Fe-2S] cluster</name>
        <dbReference type="ChEBI" id="CHEBI:190135"/>
    </cofactor>
    <text evidence="1">Binds 1 [2Fe-2S] cluster.</text>
</comment>
<comment type="cofactor">
    <cofactor evidence="1">
        <name>hybrid [4Fe-2O-2S] cluster</name>
        <dbReference type="ChEBI" id="CHEBI:60519"/>
    </cofactor>
    <text evidence="1">Binds 1 hybrid [4Fe-2O-2S] cluster.</text>
</comment>
<comment type="subcellular location">
    <subcellularLocation>
        <location evidence="1">Cytoplasm</location>
    </subcellularLocation>
</comment>
<comment type="similarity">
    <text evidence="1">Belongs to the HCP family.</text>
</comment>
<organism>
    <name type="scientific">Yersinia pestis bv. Antiqua (strain Angola)</name>
    <dbReference type="NCBI Taxonomy" id="349746"/>
    <lineage>
        <taxon>Bacteria</taxon>
        <taxon>Pseudomonadati</taxon>
        <taxon>Pseudomonadota</taxon>
        <taxon>Gammaproteobacteria</taxon>
        <taxon>Enterobacterales</taxon>
        <taxon>Yersiniaceae</taxon>
        <taxon>Yersinia</taxon>
    </lineage>
</organism>
<protein>
    <recommendedName>
        <fullName evidence="1">Hydroxylamine reductase</fullName>
        <ecNumber evidence="1">1.7.99.1</ecNumber>
    </recommendedName>
    <alternativeName>
        <fullName evidence="1">Hybrid-cluster protein</fullName>
        <shortName evidence="1">HCP</shortName>
    </alternativeName>
    <alternativeName>
        <fullName evidence="1">Prismane protein</fullName>
    </alternativeName>
</protein>
<feature type="chain" id="PRO_1000092359" description="Hydroxylamine reductase">
    <location>
        <begin position="1"/>
        <end position="550"/>
    </location>
</feature>
<feature type="binding site" evidence="1">
    <location>
        <position position="3"/>
    </location>
    <ligand>
        <name>[2Fe-2S] cluster</name>
        <dbReference type="ChEBI" id="CHEBI:190135"/>
    </ligand>
</feature>
<feature type="binding site" evidence="1">
    <location>
        <position position="6"/>
    </location>
    <ligand>
        <name>[2Fe-2S] cluster</name>
        <dbReference type="ChEBI" id="CHEBI:190135"/>
    </ligand>
</feature>
<feature type="binding site" evidence="1">
    <location>
        <position position="18"/>
    </location>
    <ligand>
        <name>[2Fe-2S] cluster</name>
        <dbReference type="ChEBI" id="CHEBI:190135"/>
    </ligand>
</feature>
<feature type="binding site" evidence="1">
    <location>
        <position position="25"/>
    </location>
    <ligand>
        <name>[2Fe-2S] cluster</name>
        <dbReference type="ChEBI" id="CHEBI:190135"/>
    </ligand>
</feature>
<feature type="binding site" evidence="1">
    <location>
        <position position="249"/>
    </location>
    <ligand>
        <name>hybrid [4Fe-2O-2S] cluster</name>
        <dbReference type="ChEBI" id="CHEBI:60519"/>
    </ligand>
</feature>
<feature type="binding site" evidence="1">
    <location>
        <position position="273"/>
    </location>
    <ligand>
        <name>hybrid [4Fe-2O-2S] cluster</name>
        <dbReference type="ChEBI" id="CHEBI:60519"/>
    </ligand>
</feature>
<feature type="binding site" evidence="1">
    <location>
        <position position="317"/>
    </location>
    <ligand>
        <name>hybrid [4Fe-2O-2S] cluster</name>
        <dbReference type="ChEBI" id="CHEBI:60519"/>
    </ligand>
</feature>
<feature type="binding site" description="via persulfide group" evidence="1">
    <location>
        <position position="405"/>
    </location>
    <ligand>
        <name>hybrid [4Fe-2O-2S] cluster</name>
        <dbReference type="ChEBI" id="CHEBI:60519"/>
    </ligand>
</feature>
<feature type="binding site" evidence="1">
    <location>
        <position position="433"/>
    </location>
    <ligand>
        <name>hybrid [4Fe-2O-2S] cluster</name>
        <dbReference type="ChEBI" id="CHEBI:60519"/>
    </ligand>
</feature>
<feature type="binding site" evidence="1">
    <location>
        <position position="458"/>
    </location>
    <ligand>
        <name>hybrid [4Fe-2O-2S] cluster</name>
        <dbReference type="ChEBI" id="CHEBI:60519"/>
    </ligand>
</feature>
<feature type="binding site" evidence="1">
    <location>
        <position position="492"/>
    </location>
    <ligand>
        <name>hybrid [4Fe-2O-2S] cluster</name>
        <dbReference type="ChEBI" id="CHEBI:60519"/>
    </ligand>
</feature>
<feature type="binding site" evidence="1">
    <location>
        <position position="494"/>
    </location>
    <ligand>
        <name>hybrid [4Fe-2O-2S] cluster</name>
        <dbReference type="ChEBI" id="CHEBI:60519"/>
    </ligand>
</feature>
<feature type="modified residue" description="Cysteine persulfide" evidence="1">
    <location>
        <position position="405"/>
    </location>
</feature>
<name>HCP_YERPG</name>
<keyword id="KW-0001">2Fe-2S</keyword>
<keyword id="KW-0963">Cytoplasm</keyword>
<keyword id="KW-0408">Iron</keyword>
<keyword id="KW-0411">Iron-sulfur</keyword>
<keyword id="KW-0479">Metal-binding</keyword>
<keyword id="KW-0560">Oxidoreductase</keyword>